<organism>
    <name type="scientific">Rattus norvegicus</name>
    <name type="common">Rat</name>
    <dbReference type="NCBI Taxonomy" id="10116"/>
    <lineage>
        <taxon>Eukaryota</taxon>
        <taxon>Metazoa</taxon>
        <taxon>Chordata</taxon>
        <taxon>Craniata</taxon>
        <taxon>Vertebrata</taxon>
        <taxon>Euteleostomi</taxon>
        <taxon>Mammalia</taxon>
        <taxon>Eutheria</taxon>
        <taxon>Euarchontoglires</taxon>
        <taxon>Glires</taxon>
        <taxon>Rodentia</taxon>
        <taxon>Myomorpha</taxon>
        <taxon>Muroidea</taxon>
        <taxon>Muridae</taxon>
        <taxon>Murinae</taxon>
        <taxon>Rattus</taxon>
    </lineage>
</organism>
<feature type="chain" id="PRO_0000376932" description="Serine/threonine-protein kinase SBK2">
    <location>
        <begin position="1"/>
        <end position="362"/>
    </location>
</feature>
<feature type="domain" description="Protein kinase" evidence="1">
    <location>
        <begin position="62"/>
        <end position="330"/>
    </location>
</feature>
<feature type="region of interest" description="Disordered" evidence="3">
    <location>
        <begin position="1"/>
        <end position="20"/>
    </location>
</feature>
<feature type="region of interest" description="Disordered" evidence="3">
    <location>
        <begin position="317"/>
        <end position="362"/>
    </location>
</feature>
<feature type="compositionally biased region" description="Basic and acidic residues" evidence="3">
    <location>
        <begin position="1"/>
        <end position="11"/>
    </location>
</feature>
<feature type="compositionally biased region" description="Basic and acidic residues" evidence="3">
    <location>
        <begin position="330"/>
        <end position="348"/>
    </location>
</feature>
<feature type="active site" description="Proton acceptor" evidence="1 2">
    <location>
        <position position="183"/>
    </location>
</feature>
<feature type="binding site" evidence="1">
    <location>
        <begin position="68"/>
        <end position="76"/>
    </location>
    <ligand>
        <name>ATP</name>
        <dbReference type="ChEBI" id="CHEBI:30616"/>
    </ligand>
</feature>
<feature type="binding site" evidence="1">
    <location>
        <position position="91"/>
    </location>
    <ligand>
        <name>ATP</name>
        <dbReference type="ChEBI" id="CHEBI:30616"/>
    </ligand>
</feature>
<dbReference type="EC" id="2.7.11.1"/>
<dbReference type="EMBL" id="CH474075">
    <property type="protein sequence ID" value="EDL75876.1"/>
    <property type="molecule type" value="Genomic_DNA"/>
</dbReference>
<dbReference type="EMBL" id="BC161893">
    <property type="protein sequence ID" value="AAI61893.1"/>
    <property type="molecule type" value="mRNA"/>
</dbReference>
<dbReference type="RefSeq" id="NP_001121011.1">
    <property type="nucleotide sequence ID" value="NM_001127539.2"/>
</dbReference>
<dbReference type="RefSeq" id="XP_017445240.1">
    <property type="nucleotide sequence ID" value="XM_017589751.1"/>
</dbReference>
<dbReference type="RefSeq" id="XP_038947471.1">
    <property type="nucleotide sequence ID" value="XM_039091543.2"/>
</dbReference>
<dbReference type="SMR" id="B1WBU5"/>
<dbReference type="FunCoup" id="B1WBU5">
    <property type="interactions" value="267"/>
</dbReference>
<dbReference type="STRING" id="10116.ENSRNOP00000055736"/>
<dbReference type="PaxDb" id="10116-ENSRNOP00000055736"/>
<dbReference type="Ensembl" id="ENSRNOT00000058956.4">
    <property type="protein sequence ID" value="ENSRNOP00000055736.2"/>
    <property type="gene ID" value="ENSRNOG00000038625.4"/>
</dbReference>
<dbReference type="GeneID" id="691411"/>
<dbReference type="KEGG" id="rno:691411"/>
<dbReference type="UCSC" id="RGD:1563279">
    <property type="organism name" value="rat"/>
</dbReference>
<dbReference type="AGR" id="RGD:1563279"/>
<dbReference type="CTD" id="646643"/>
<dbReference type="RGD" id="1563279">
    <property type="gene designation" value="Sbk2"/>
</dbReference>
<dbReference type="eggNOG" id="KOG1345">
    <property type="taxonomic scope" value="Eukaryota"/>
</dbReference>
<dbReference type="GeneTree" id="ENSGT00940000161663"/>
<dbReference type="HOGENOM" id="CLU_000288_10_0_1"/>
<dbReference type="InParanoid" id="B1WBU5"/>
<dbReference type="OMA" id="HRQKGTT"/>
<dbReference type="OrthoDB" id="6513151at2759"/>
<dbReference type="PhylomeDB" id="B1WBU5"/>
<dbReference type="TreeFam" id="TF326736"/>
<dbReference type="PRO" id="PR:B1WBU5"/>
<dbReference type="Proteomes" id="UP000002494">
    <property type="component" value="Chromosome 1"/>
</dbReference>
<dbReference type="Proteomes" id="UP000234681">
    <property type="component" value="Chromosome 1"/>
</dbReference>
<dbReference type="Bgee" id="ENSRNOG00000038625">
    <property type="expression patterns" value="Expressed in esophagus and 3 other cell types or tissues"/>
</dbReference>
<dbReference type="GO" id="GO:0005524">
    <property type="term" value="F:ATP binding"/>
    <property type="evidence" value="ECO:0007669"/>
    <property type="project" value="UniProtKB-KW"/>
</dbReference>
<dbReference type="GO" id="GO:0004708">
    <property type="term" value="F:MAP kinase kinase activity"/>
    <property type="evidence" value="ECO:0000318"/>
    <property type="project" value="GO_Central"/>
</dbReference>
<dbReference type="GO" id="GO:0106310">
    <property type="term" value="F:protein serine kinase activity"/>
    <property type="evidence" value="ECO:0007669"/>
    <property type="project" value="RHEA"/>
</dbReference>
<dbReference type="GO" id="GO:0004674">
    <property type="term" value="F:protein serine/threonine kinase activity"/>
    <property type="evidence" value="ECO:0007669"/>
    <property type="project" value="UniProtKB-KW"/>
</dbReference>
<dbReference type="GO" id="GO:0000165">
    <property type="term" value="P:MAPK cascade"/>
    <property type="evidence" value="ECO:0000318"/>
    <property type="project" value="GO_Central"/>
</dbReference>
<dbReference type="FunFam" id="1.10.510.10:FF:000515">
    <property type="entry name" value="serine/threonine-protein kinase SBK2"/>
    <property type="match status" value="1"/>
</dbReference>
<dbReference type="Gene3D" id="1.10.510.10">
    <property type="entry name" value="Transferase(Phosphotransferase) domain 1"/>
    <property type="match status" value="1"/>
</dbReference>
<dbReference type="InterPro" id="IPR011009">
    <property type="entry name" value="Kinase-like_dom_sf"/>
</dbReference>
<dbReference type="InterPro" id="IPR000719">
    <property type="entry name" value="Prot_kinase_dom"/>
</dbReference>
<dbReference type="InterPro" id="IPR017441">
    <property type="entry name" value="Protein_kinase_ATP_BS"/>
</dbReference>
<dbReference type="InterPro" id="IPR008271">
    <property type="entry name" value="Ser/Thr_kinase_AS"/>
</dbReference>
<dbReference type="PANTHER" id="PTHR24359:SF34">
    <property type="entry name" value="PROTEIN KINASE DOMAIN-CONTAINING PROTEIN"/>
    <property type="match status" value="1"/>
</dbReference>
<dbReference type="PANTHER" id="PTHR24359">
    <property type="entry name" value="SERINE/THREONINE-PROTEIN KINASE SBK1"/>
    <property type="match status" value="1"/>
</dbReference>
<dbReference type="Pfam" id="PF00069">
    <property type="entry name" value="Pkinase"/>
    <property type="match status" value="1"/>
</dbReference>
<dbReference type="SMART" id="SM00220">
    <property type="entry name" value="S_TKc"/>
    <property type="match status" value="1"/>
</dbReference>
<dbReference type="SUPFAM" id="SSF56112">
    <property type="entry name" value="Protein kinase-like (PK-like)"/>
    <property type="match status" value="1"/>
</dbReference>
<dbReference type="PROSITE" id="PS00107">
    <property type="entry name" value="PROTEIN_KINASE_ATP"/>
    <property type="match status" value="1"/>
</dbReference>
<dbReference type="PROSITE" id="PS50011">
    <property type="entry name" value="PROTEIN_KINASE_DOM"/>
    <property type="match status" value="1"/>
</dbReference>
<dbReference type="PROSITE" id="PS00108">
    <property type="entry name" value="PROTEIN_KINASE_ST"/>
    <property type="match status" value="1"/>
</dbReference>
<keyword id="KW-0067">ATP-binding</keyword>
<keyword id="KW-0418">Kinase</keyword>
<keyword id="KW-0547">Nucleotide-binding</keyword>
<keyword id="KW-1185">Reference proteome</keyword>
<keyword id="KW-0677">Repeat</keyword>
<keyword id="KW-0723">Serine/threonine-protein kinase</keyword>
<keyword id="KW-0808">Transferase</keyword>
<reference key="1">
    <citation type="submission" date="2005-07" db="EMBL/GenBank/DDBJ databases">
        <authorList>
            <person name="Mural R.J."/>
            <person name="Adams M.D."/>
            <person name="Myers E.W."/>
            <person name="Smith H.O."/>
            <person name="Venter J.C."/>
        </authorList>
    </citation>
    <scope>NUCLEOTIDE SEQUENCE [LARGE SCALE GENOMIC DNA]</scope>
</reference>
<reference key="2">
    <citation type="journal article" date="2004" name="Genome Res.">
        <title>The status, quality, and expansion of the NIH full-length cDNA project: the Mammalian Gene Collection (MGC).</title>
        <authorList>
            <consortium name="The MGC Project Team"/>
        </authorList>
    </citation>
    <scope>NUCLEOTIDE SEQUENCE [LARGE SCALE MRNA]</scope>
    <source>
        <tissue>Heart</tissue>
    </source>
</reference>
<proteinExistence type="evidence at transcript level"/>
<sequence length="362" mass="39773">MPGKQSEDRPMEVAAVEDGGDEGLGGLTVEELQQGQEAALALEDMMALSAQTLVRTEVEELYEEVRPLGQGRFGRVLLVTHRQKGTPLALKQLPKHSTSLRSFLYEFCVGLSLGTHPAIVAAYGIGIESANSYSFLTEPVLHGDLITFIKPKVGLPQPAVQRCAAQLASALEHIHSHGLVYRDLKPENVLVCDPACQRVKLTDFGHTRPRGTMLRLTGPPIPYTAPELCAPPPLPEGLPIQPALDAWALGVLIFCLLTGYFPWDQPLVEVDPFFEDFLIWQASGQPQDRPQPWYNLSPAADTLLWGLLDPHPRKRNPVSSIKSYLGQPWKQREEGAEELTKELREDGSRGGQEAAKGEQPAC</sequence>
<evidence type="ECO:0000255" key="1">
    <source>
        <dbReference type="PROSITE-ProRule" id="PRU00159"/>
    </source>
</evidence>
<evidence type="ECO:0000255" key="2">
    <source>
        <dbReference type="PROSITE-ProRule" id="PRU10027"/>
    </source>
</evidence>
<evidence type="ECO:0000256" key="3">
    <source>
        <dbReference type="SAM" id="MobiDB-lite"/>
    </source>
</evidence>
<name>SBK2_RAT</name>
<accession>B1WBU5</accession>
<comment type="catalytic activity">
    <reaction>
        <text>L-seryl-[protein] + ATP = O-phospho-L-seryl-[protein] + ADP + H(+)</text>
        <dbReference type="Rhea" id="RHEA:17989"/>
        <dbReference type="Rhea" id="RHEA-COMP:9863"/>
        <dbReference type="Rhea" id="RHEA-COMP:11604"/>
        <dbReference type="ChEBI" id="CHEBI:15378"/>
        <dbReference type="ChEBI" id="CHEBI:29999"/>
        <dbReference type="ChEBI" id="CHEBI:30616"/>
        <dbReference type="ChEBI" id="CHEBI:83421"/>
        <dbReference type="ChEBI" id="CHEBI:456216"/>
        <dbReference type="EC" id="2.7.11.1"/>
    </reaction>
</comment>
<comment type="catalytic activity">
    <reaction>
        <text>L-threonyl-[protein] + ATP = O-phospho-L-threonyl-[protein] + ADP + H(+)</text>
        <dbReference type="Rhea" id="RHEA:46608"/>
        <dbReference type="Rhea" id="RHEA-COMP:11060"/>
        <dbReference type="Rhea" id="RHEA-COMP:11605"/>
        <dbReference type="ChEBI" id="CHEBI:15378"/>
        <dbReference type="ChEBI" id="CHEBI:30013"/>
        <dbReference type="ChEBI" id="CHEBI:30616"/>
        <dbReference type="ChEBI" id="CHEBI:61977"/>
        <dbReference type="ChEBI" id="CHEBI:456216"/>
        <dbReference type="EC" id="2.7.11.1"/>
    </reaction>
</comment>
<comment type="similarity">
    <text evidence="1">Belongs to the protein kinase superfamily. Ser/Thr protein kinase family. STKL subfamily.</text>
</comment>
<protein>
    <recommendedName>
        <fullName>Serine/threonine-protein kinase SBK2</fullName>
        <ecNumber>2.7.11.1</ecNumber>
    </recommendedName>
    <alternativeName>
        <fullName>SH3 domain-binding kinase family member 2</fullName>
    </alternativeName>
</protein>
<gene>
    <name type="primary">Sbk2</name>
</gene>